<comment type="function">
    <text evidence="1">Catalyzes the methylthiolation of N6-(dimethylallyl)adenosine (i(6)A), leading to the formation of 2-methylthio-N6-(dimethylallyl)adenosine (ms(2)i(6)A) at position 37 in tRNAs that read codons beginning with uridine.</text>
</comment>
<comment type="catalytic activity">
    <reaction evidence="1">
        <text>N(6)-dimethylallyladenosine(37) in tRNA + (sulfur carrier)-SH + AH2 + 2 S-adenosyl-L-methionine = 2-methylsulfanyl-N(6)-dimethylallyladenosine(37) in tRNA + (sulfur carrier)-H + 5'-deoxyadenosine + L-methionine + A + S-adenosyl-L-homocysteine + 2 H(+)</text>
        <dbReference type="Rhea" id="RHEA:37067"/>
        <dbReference type="Rhea" id="RHEA-COMP:10375"/>
        <dbReference type="Rhea" id="RHEA-COMP:10376"/>
        <dbReference type="Rhea" id="RHEA-COMP:14737"/>
        <dbReference type="Rhea" id="RHEA-COMP:14739"/>
        <dbReference type="ChEBI" id="CHEBI:13193"/>
        <dbReference type="ChEBI" id="CHEBI:15378"/>
        <dbReference type="ChEBI" id="CHEBI:17319"/>
        <dbReference type="ChEBI" id="CHEBI:17499"/>
        <dbReference type="ChEBI" id="CHEBI:29917"/>
        <dbReference type="ChEBI" id="CHEBI:57844"/>
        <dbReference type="ChEBI" id="CHEBI:57856"/>
        <dbReference type="ChEBI" id="CHEBI:59789"/>
        <dbReference type="ChEBI" id="CHEBI:64428"/>
        <dbReference type="ChEBI" id="CHEBI:74415"/>
        <dbReference type="ChEBI" id="CHEBI:74417"/>
        <dbReference type="EC" id="2.8.4.3"/>
    </reaction>
</comment>
<comment type="cofactor">
    <cofactor evidence="1">
        <name>[4Fe-4S] cluster</name>
        <dbReference type="ChEBI" id="CHEBI:49883"/>
    </cofactor>
    <text evidence="1">Binds 2 [4Fe-4S] clusters. One cluster is coordinated with 3 cysteines and an exchangeable S-adenosyl-L-methionine.</text>
</comment>
<comment type="subunit">
    <text evidence="1">Monomer.</text>
</comment>
<comment type="subcellular location">
    <subcellularLocation>
        <location evidence="1">Cytoplasm</location>
    </subcellularLocation>
</comment>
<comment type="similarity">
    <text evidence="1">Belongs to the methylthiotransferase family. MiaB subfamily.</text>
</comment>
<protein>
    <recommendedName>
        <fullName evidence="1">tRNA-2-methylthio-N(6)-dimethylallyladenosine synthase</fullName>
        <ecNumber evidence="1">2.8.4.3</ecNumber>
    </recommendedName>
    <alternativeName>
        <fullName evidence="1">(Dimethylallyl)adenosine tRNA methylthiotransferase MiaB</fullName>
    </alternativeName>
    <alternativeName>
        <fullName evidence="1">tRNA-i(6)A37 methylthiotransferase</fullName>
    </alternativeName>
</protein>
<keyword id="KW-0004">4Fe-4S</keyword>
<keyword id="KW-0963">Cytoplasm</keyword>
<keyword id="KW-0408">Iron</keyword>
<keyword id="KW-0411">Iron-sulfur</keyword>
<keyword id="KW-0479">Metal-binding</keyword>
<keyword id="KW-1185">Reference proteome</keyword>
<keyword id="KW-0949">S-adenosyl-L-methionine</keyword>
<keyword id="KW-0808">Transferase</keyword>
<keyword id="KW-0819">tRNA processing</keyword>
<feature type="chain" id="PRO_0000141756" description="tRNA-2-methylthio-N(6)-dimethylallyladenosine synthase">
    <location>
        <begin position="1"/>
        <end position="456"/>
    </location>
</feature>
<feature type="domain" description="MTTase N-terminal" evidence="1">
    <location>
        <begin position="1"/>
        <end position="116"/>
    </location>
</feature>
<feature type="domain" description="Radical SAM core" evidence="2">
    <location>
        <begin position="148"/>
        <end position="384"/>
    </location>
</feature>
<feature type="domain" description="TRAM" evidence="1">
    <location>
        <begin position="387"/>
        <end position="452"/>
    </location>
</feature>
<feature type="binding site" evidence="1">
    <location>
        <position position="10"/>
    </location>
    <ligand>
        <name>[4Fe-4S] cluster</name>
        <dbReference type="ChEBI" id="CHEBI:49883"/>
        <label>1</label>
    </ligand>
</feature>
<feature type="binding site" evidence="1">
    <location>
        <position position="46"/>
    </location>
    <ligand>
        <name>[4Fe-4S] cluster</name>
        <dbReference type="ChEBI" id="CHEBI:49883"/>
        <label>1</label>
    </ligand>
</feature>
<feature type="binding site" evidence="1">
    <location>
        <position position="79"/>
    </location>
    <ligand>
        <name>[4Fe-4S] cluster</name>
        <dbReference type="ChEBI" id="CHEBI:49883"/>
        <label>1</label>
    </ligand>
</feature>
<feature type="binding site" evidence="1">
    <location>
        <position position="162"/>
    </location>
    <ligand>
        <name>[4Fe-4S] cluster</name>
        <dbReference type="ChEBI" id="CHEBI:49883"/>
        <label>2</label>
        <note>4Fe-4S-S-AdoMet</note>
    </ligand>
</feature>
<feature type="binding site" evidence="1">
    <location>
        <position position="166"/>
    </location>
    <ligand>
        <name>[4Fe-4S] cluster</name>
        <dbReference type="ChEBI" id="CHEBI:49883"/>
        <label>2</label>
        <note>4Fe-4S-S-AdoMet</note>
    </ligand>
</feature>
<feature type="binding site" evidence="1">
    <location>
        <position position="169"/>
    </location>
    <ligand>
        <name>[4Fe-4S] cluster</name>
        <dbReference type="ChEBI" id="CHEBI:49883"/>
        <label>2</label>
        <note>4Fe-4S-S-AdoMet</note>
    </ligand>
</feature>
<dbReference type="EC" id="2.8.4.3" evidence="1"/>
<dbReference type="EMBL" id="AE000520">
    <property type="protein sequence ID" value="AAC65721.1"/>
    <property type="molecule type" value="Genomic_DNA"/>
</dbReference>
<dbReference type="PIR" id="E71284">
    <property type="entry name" value="E71284"/>
</dbReference>
<dbReference type="RefSeq" id="WP_010882199.1">
    <property type="nucleotide sequence ID" value="NC_021490.2"/>
</dbReference>
<dbReference type="SMR" id="O83735"/>
<dbReference type="IntAct" id="O83735">
    <property type="interactions" value="3"/>
</dbReference>
<dbReference type="STRING" id="243276.TP_0754"/>
<dbReference type="EnsemblBacteria" id="AAC65721">
    <property type="protein sequence ID" value="AAC65721"/>
    <property type="gene ID" value="TP_0754"/>
</dbReference>
<dbReference type="GeneID" id="93876521"/>
<dbReference type="KEGG" id="tpa:TP_0754"/>
<dbReference type="KEGG" id="tpw:TPANIC_0754"/>
<dbReference type="eggNOG" id="COG0621">
    <property type="taxonomic scope" value="Bacteria"/>
</dbReference>
<dbReference type="HOGENOM" id="CLU_018697_2_0_12"/>
<dbReference type="OrthoDB" id="9805215at2"/>
<dbReference type="Proteomes" id="UP000000811">
    <property type="component" value="Chromosome"/>
</dbReference>
<dbReference type="GO" id="GO:0005829">
    <property type="term" value="C:cytosol"/>
    <property type="evidence" value="ECO:0007669"/>
    <property type="project" value="TreeGrafter"/>
</dbReference>
<dbReference type="GO" id="GO:0051539">
    <property type="term" value="F:4 iron, 4 sulfur cluster binding"/>
    <property type="evidence" value="ECO:0007669"/>
    <property type="project" value="UniProtKB-UniRule"/>
</dbReference>
<dbReference type="GO" id="GO:0046872">
    <property type="term" value="F:metal ion binding"/>
    <property type="evidence" value="ECO:0007669"/>
    <property type="project" value="UniProtKB-KW"/>
</dbReference>
<dbReference type="GO" id="GO:0035597">
    <property type="term" value="F:N6-isopentenyladenosine methylthiotransferase activity"/>
    <property type="evidence" value="ECO:0007669"/>
    <property type="project" value="TreeGrafter"/>
</dbReference>
<dbReference type="CDD" id="cd01335">
    <property type="entry name" value="Radical_SAM"/>
    <property type="match status" value="1"/>
</dbReference>
<dbReference type="FunFam" id="3.40.50.12160:FF:000003">
    <property type="entry name" value="CDK5 regulatory subunit-associated protein 1"/>
    <property type="match status" value="1"/>
</dbReference>
<dbReference type="FunFam" id="3.80.30.20:FF:000001">
    <property type="entry name" value="tRNA-2-methylthio-N(6)-dimethylallyladenosine synthase 2"/>
    <property type="match status" value="1"/>
</dbReference>
<dbReference type="Gene3D" id="3.40.50.12160">
    <property type="entry name" value="Methylthiotransferase, N-terminal domain"/>
    <property type="match status" value="1"/>
</dbReference>
<dbReference type="Gene3D" id="3.80.30.20">
    <property type="entry name" value="tm_1862 like domain"/>
    <property type="match status" value="1"/>
</dbReference>
<dbReference type="HAMAP" id="MF_01864">
    <property type="entry name" value="tRNA_metthiotr_MiaB"/>
    <property type="match status" value="1"/>
</dbReference>
<dbReference type="InterPro" id="IPR006638">
    <property type="entry name" value="Elp3/MiaA/NifB-like_rSAM"/>
</dbReference>
<dbReference type="InterPro" id="IPR005839">
    <property type="entry name" value="Methylthiotransferase"/>
</dbReference>
<dbReference type="InterPro" id="IPR020612">
    <property type="entry name" value="Methylthiotransferase_CS"/>
</dbReference>
<dbReference type="InterPro" id="IPR013848">
    <property type="entry name" value="Methylthiotransferase_N"/>
</dbReference>
<dbReference type="InterPro" id="IPR038135">
    <property type="entry name" value="Methylthiotransferase_N_sf"/>
</dbReference>
<dbReference type="InterPro" id="IPR006463">
    <property type="entry name" value="MiaB_methiolase"/>
</dbReference>
<dbReference type="InterPro" id="IPR007197">
    <property type="entry name" value="rSAM"/>
</dbReference>
<dbReference type="InterPro" id="IPR023404">
    <property type="entry name" value="rSAM_horseshoe"/>
</dbReference>
<dbReference type="InterPro" id="IPR002792">
    <property type="entry name" value="TRAM_dom"/>
</dbReference>
<dbReference type="NCBIfam" id="TIGR01574">
    <property type="entry name" value="miaB-methiolase"/>
    <property type="match status" value="1"/>
</dbReference>
<dbReference type="NCBIfam" id="TIGR00089">
    <property type="entry name" value="MiaB/RimO family radical SAM methylthiotransferase"/>
    <property type="match status" value="1"/>
</dbReference>
<dbReference type="PANTHER" id="PTHR43020">
    <property type="entry name" value="CDK5 REGULATORY SUBUNIT-ASSOCIATED PROTEIN 1"/>
    <property type="match status" value="1"/>
</dbReference>
<dbReference type="PANTHER" id="PTHR43020:SF2">
    <property type="entry name" value="MITOCHONDRIAL TRNA METHYLTHIOTRANSFERASE CDK5RAP1"/>
    <property type="match status" value="1"/>
</dbReference>
<dbReference type="Pfam" id="PF04055">
    <property type="entry name" value="Radical_SAM"/>
    <property type="match status" value="1"/>
</dbReference>
<dbReference type="Pfam" id="PF01938">
    <property type="entry name" value="TRAM"/>
    <property type="match status" value="1"/>
</dbReference>
<dbReference type="Pfam" id="PF00919">
    <property type="entry name" value="UPF0004"/>
    <property type="match status" value="1"/>
</dbReference>
<dbReference type="SFLD" id="SFLDF00273">
    <property type="entry name" value="(dimethylallyl)adenosine_tRNA"/>
    <property type="match status" value="1"/>
</dbReference>
<dbReference type="SFLD" id="SFLDG01082">
    <property type="entry name" value="B12-binding_domain_containing"/>
    <property type="match status" value="1"/>
</dbReference>
<dbReference type="SFLD" id="SFLDG01061">
    <property type="entry name" value="methylthiotransferase"/>
    <property type="match status" value="1"/>
</dbReference>
<dbReference type="SMART" id="SM00729">
    <property type="entry name" value="Elp3"/>
    <property type="match status" value="1"/>
</dbReference>
<dbReference type="SUPFAM" id="SSF102114">
    <property type="entry name" value="Radical SAM enzymes"/>
    <property type="match status" value="1"/>
</dbReference>
<dbReference type="PROSITE" id="PS51449">
    <property type="entry name" value="MTTASE_N"/>
    <property type="match status" value="1"/>
</dbReference>
<dbReference type="PROSITE" id="PS01278">
    <property type="entry name" value="MTTASE_RADICAL"/>
    <property type="match status" value="1"/>
</dbReference>
<dbReference type="PROSITE" id="PS51918">
    <property type="entry name" value="RADICAL_SAM"/>
    <property type="match status" value="1"/>
</dbReference>
<dbReference type="PROSITE" id="PS50926">
    <property type="entry name" value="TRAM"/>
    <property type="match status" value="1"/>
</dbReference>
<gene>
    <name evidence="1" type="primary">miaB</name>
    <name type="ordered locus">TP_0754</name>
</gene>
<organism>
    <name type="scientific">Treponema pallidum (strain Nichols)</name>
    <dbReference type="NCBI Taxonomy" id="243276"/>
    <lineage>
        <taxon>Bacteria</taxon>
        <taxon>Pseudomonadati</taxon>
        <taxon>Spirochaetota</taxon>
        <taxon>Spirochaetia</taxon>
        <taxon>Spirochaetales</taxon>
        <taxon>Treponemataceae</taxon>
        <taxon>Treponema</taxon>
    </lineage>
</organism>
<accession>O83735</accession>
<sequence>MTYFFETYGCQMNVAESASVEQLLLARGWTKAVDAQTCDVLIINTCSVRITAETRVFGRLGLFSSLKKKRAFFIILMGCMAQRLHDKIQQQFPRIDYVVGTFAHARFESIFQEIEQKLTQKDYRFEFISERYREHPVSGYRFFASSYSEGSFQSFIPIMNGCNNFCSFCIVPYVRGREISRDLDAILQEVDVLSEKGVREITLLGQNVNSYRGRDREGNIVTFPQLLRHLVRRCEVKDQIKWIRFVSSHPKDLSDDLIATIAQESRLCRLVHLPVQHGANGVLKRMRRSYTREQYLSLVGKLKASVPNVALSTDILIGFPGETEEDFEQTLDLMREVEFDSAFMYHYNPREGTPAYDFPDRIPDATRIARLQRVIALQMSTTLKKMRARVGKTLPVLVESRSRNNPEELFGHTELGEMTVLEGKVDPTYIGRFVDVQVKEVRGRTLRAHLVQERAK</sequence>
<reference key="1">
    <citation type="journal article" date="1998" name="Science">
        <title>Complete genome sequence of Treponema pallidum, the syphilis spirochete.</title>
        <authorList>
            <person name="Fraser C.M."/>
            <person name="Norris S.J."/>
            <person name="Weinstock G.M."/>
            <person name="White O."/>
            <person name="Sutton G.G."/>
            <person name="Dodson R.J."/>
            <person name="Gwinn M.L."/>
            <person name="Hickey E.K."/>
            <person name="Clayton R.A."/>
            <person name="Ketchum K.A."/>
            <person name="Sodergren E."/>
            <person name="Hardham J.M."/>
            <person name="McLeod M.P."/>
            <person name="Salzberg S.L."/>
            <person name="Peterson J.D."/>
            <person name="Khalak H.G."/>
            <person name="Richardson D.L."/>
            <person name="Howell J.K."/>
            <person name="Chidambaram M."/>
            <person name="Utterback T.R."/>
            <person name="McDonald L.A."/>
            <person name="Artiach P."/>
            <person name="Bowman C."/>
            <person name="Cotton M.D."/>
            <person name="Fujii C."/>
            <person name="Garland S.A."/>
            <person name="Hatch B."/>
            <person name="Horst K."/>
            <person name="Roberts K.M."/>
            <person name="Sandusky M."/>
            <person name="Weidman J.F."/>
            <person name="Smith H.O."/>
            <person name="Venter J.C."/>
        </authorList>
    </citation>
    <scope>NUCLEOTIDE SEQUENCE [LARGE SCALE GENOMIC DNA]</scope>
    <source>
        <strain>Nichols</strain>
    </source>
</reference>
<name>MIAB_TREPA</name>
<evidence type="ECO:0000255" key="1">
    <source>
        <dbReference type="HAMAP-Rule" id="MF_01864"/>
    </source>
</evidence>
<evidence type="ECO:0000255" key="2">
    <source>
        <dbReference type="PROSITE-ProRule" id="PRU01266"/>
    </source>
</evidence>
<proteinExistence type="inferred from homology"/>